<organism>
    <name type="scientific">Syntrophotalea carbinolica (strain DSM 2380 / NBRC 103641 / GraBd1)</name>
    <name type="common">Pelobacter carbinolicus</name>
    <dbReference type="NCBI Taxonomy" id="338963"/>
    <lineage>
        <taxon>Bacteria</taxon>
        <taxon>Pseudomonadati</taxon>
        <taxon>Thermodesulfobacteriota</taxon>
        <taxon>Desulfuromonadia</taxon>
        <taxon>Desulfuromonadales</taxon>
        <taxon>Syntrophotaleaceae</taxon>
        <taxon>Syntrophotalea</taxon>
    </lineage>
</organism>
<feature type="chain" id="PRO_0000284265" description="Endoribonuclease YbeY">
    <location>
        <begin position="1"/>
        <end position="150"/>
    </location>
</feature>
<feature type="binding site" evidence="1">
    <location>
        <position position="113"/>
    </location>
    <ligand>
        <name>Zn(2+)</name>
        <dbReference type="ChEBI" id="CHEBI:29105"/>
        <note>catalytic</note>
    </ligand>
</feature>
<feature type="binding site" evidence="1">
    <location>
        <position position="117"/>
    </location>
    <ligand>
        <name>Zn(2+)</name>
        <dbReference type="ChEBI" id="CHEBI:29105"/>
        <note>catalytic</note>
    </ligand>
</feature>
<feature type="binding site" evidence="1">
    <location>
        <position position="123"/>
    </location>
    <ligand>
        <name>Zn(2+)</name>
        <dbReference type="ChEBI" id="CHEBI:29105"/>
        <note>catalytic</note>
    </ligand>
</feature>
<keyword id="KW-0963">Cytoplasm</keyword>
<keyword id="KW-0255">Endonuclease</keyword>
<keyword id="KW-0378">Hydrolase</keyword>
<keyword id="KW-0479">Metal-binding</keyword>
<keyword id="KW-0540">Nuclease</keyword>
<keyword id="KW-1185">Reference proteome</keyword>
<keyword id="KW-0690">Ribosome biogenesis</keyword>
<keyword id="KW-0698">rRNA processing</keyword>
<keyword id="KW-0862">Zinc</keyword>
<reference key="1">
    <citation type="submission" date="2005-10" db="EMBL/GenBank/DDBJ databases">
        <title>Complete sequence of Pelobacter carbinolicus DSM 2380.</title>
        <authorList>
            <person name="Copeland A."/>
            <person name="Lucas S."/>
            <person name="Lapidus A."/>
            <person name="Barry K."/>
            <person name="Detter J.C."/>
            <person name="Glavina T."/>
            <person name="Hammon N."/>
            <person name="Israni S."/>
            <person name="Pitluck S."/>
            <person name="Chertkov O."/>
            <person name="Schmutz J."/>
            <person name="Larimer F."/>
            <person name="Land M."/>
            <person name="Kyrpides N."/>
            <person name="Ivanova N."/>
            <person name="Richardson P."/>
        </authorList>
    </citation>
    <scope>NUCLEOTIDE SEQUENCE [LARGE SCALE GENOMIC DNA]</scope>
    <source>
        <strain>DSM 2380 / NBRC 103641 / GraBd1</strain>
    </source>
</reference>
<gene>
    <name evidence="1" type="primary">ybeY</name>
    <name type="ordered locus">Pcar_1233</name>
</gene>
<name>YBEY_SYNC1</name>
<sequence>MGMIHIENRQKNQKIAVETLEKVAQRILNDSECPDAELSLLIVDDIEIQQINRDYLQRDKPTNVISFAMQEGEDVGLHPGLLGDVIISADTAARDAREADLPFESELYFLLLHGVLHLLGYDHERGTEEDARRMEAREAELFARIREEFL</sequence>
<protein>
    <recommendedName>
        <fullName evidence="1">Endoribonuclease YbeY</fullName>
        <ecNumber evidence="1">3.1.-.-</ecNumber>
    </recommendedName>
</protein>
<accession>Q3A575</accession>
<comment type="function">
    <text evidence="1">Single strand-specific metallo-endoribonuclease involved in late-stage 70S ribosome quality control and in maturation of the 3' terminus of the 16S rRNA.</text>
</comment>
<comment type="cofactor">
    <cofactor evidence="1">
        <name>Zn(2+)</name>
        <dbReference type="ChEBI" id="CHEBI:29105"/>
    </cofactor>
    <text evidence="1">Binds 1 zinc ion.</text>
</comment>
<comment type="subcellular location">
    <subcellularLocation>
        <location evidence="1">Cytoplasm</location>
    </subcellularLocation>
</comment>
<comment type="similarity">
    <text evidence="1">Belongs to the endoribonuclease YbeY family.</text>
</comment>
<dbReference type="EC" id="3.1.-.-" evidence="1"/>
<dbReference type="EMBL" id="CP000142">
    <property type="protein sequence ID" value="ABA88482.2"/>
    <property type="molecule type" value="Genomic_DNA"/>
</dbReference>
<dbReference type="SMR" id="Q3A575"/>
<dbReference type="STRING" id="338963.Pcar_1233"/>
<dbReference type="KEGG" id="pca:Pcar_1233"/>
<dbReference type="eggNOG" id="COG0319">
    <property type="taxonomic scope" value="Bacteria"/>
</dbReference>
<dbReference type="HOGENOM" id="CLU_106710_3_3_7"/>
<dbReference type="OrthoDB" id="9807740at2"/>
<dbReference type="Proteomes" id="UP000002534">
    <property type="component" value="Chromosome"/>
</dbReference>
<dbReference type="GO" id="GO:0005737">
    <property type="term" value="C:cytoplasm"/>
    <property type="evidence" value="ECO:0007669"/>
    <property type="project" value="UniProtKB-SubCell"/>
</dbReference>
<dbReference type="GO" id="GO:0004222">
    <property type="term" value="F:metalloendopeptidase activity"/>
    <property type="evidence" value="ECO:0007669"/>
    <property type="project" value="InterPro"/>
</dbReference>
<dbReference type="GO" id="GO:0004521">
    <property type="term" value="F:RNA endonuclease activity"/>
    <property type="evidence" value="ECO:0007669"/>
    <property type="project" value="UniProtKB-UniRule"/>
</dbReference>
<dbReference type="GO" id="GO:0008270">
    <property type="term" value="F:zinc ion binding"/>
    <property type="evidence" value="ECO:0007669"/>
    <property type="project" value="UniProtKB-UniRule"/>
</dbReference>
<dbReference type="GO" id="GO:0006364">
    <property type="term" value="P:rRNA processing"/>
    <property type="evidence" value="ECO:0007669"/>
    <property type="project" value="UniProtKB-UniRule"/>
</dbReference>
<dbReference type="Gene3D" id="3.40.390.30">
    <property type="entry name" value="Metalloproteases ('zincins'), catalytic domain"/>
    <property type="match status" value="1"/>
</dbReference>
<dbReference type="HAMAP" id="MF_00009">
    <property type="entry name" value="Endoribonucl_YbeY"/>
    <property type="match status" value="1"/>
</dbReference>
<dbReference type="InterPro" id="IPR023091">
    <property type="entry name" value="MetalPrtase_cat_dom_sf_prd"/>
</dbReference>
<dbReference type="InterPro" id="IPR002036">
    <property type="entry name" value="YbeY"/>
</dbReference>
<dbReference type="InterPro" id="IPR020549">
    <property type="entry name" value="YbeY_CS"/>
</dbReference>
<dbReference type="NCBIfam" id="TIGR00043">
    <property type="entry name" value="rRNA maturation RNase YbeY"/>
    <property type="match status" value="1"/>
</dbReference>
<dbReference type="PANTHER" id="PTHR46986">
    <property type="entry name" value="ENDORIBONUCLEASE YBEY, CHLOROPLASTIC"/>
    <property type="match status" value="1"/>
</dbReference>
<dbReference type="PANTHER" id="PTHR46986:SF1">
    <property type="entry name" value="ENDORIBONUCLEASE YBEY, CHLOROPLASTIC"/>
    <property type="match status" value="1"/>
</dbReference>
<dbReference type="Pfam" id="PF02130">
    <property type="entry name" value="YbeY"/>
    <property type="match status" value="1"/>
</dbReference>
<dbReference type="SUPFAM" id="SSF55486">
    <property type="entry name" value="Metalloproteases ('zincins'), catalytic domain"/>
    <property type="match status" value="1"/>
</dbReference>
<dbReference type="PROSITE" id="PS01306">
    <property type="entry name" value="UPF0054"/>
    <property type="match status" value="1"/>
</dbReference>
<proteinExistence type="inferred from homology"/>
<evidence type="ECO:0000255" key="1">
    <source>
        <dbReference type="HAMAP-Rule" id="MF_00009"/>
    </source>
</evidence>